<proteinExistence type="inferred from homology"/>
<organism>
    <name type="scientific">Chlorobium luteolum (strain DSM 273 / BCRC 81028 / 2530)</name>
    <name type="common">Pelodictyon luteolum</name>
    <dbReference type="NCBI Taxonomy" id="319225"/>
    <lineage>
        <taxon>Bacteria</taxon>
        <taxon>Pseudomonadati</taxon>
        <taxon>Chlorobiota</taxon>
        <taxon>Chlorobiia</taxon>
        <taxon>Chlorobiales</taxon>
        <taxon>Chlorobiaceae</taxon>
        <taxon>Chlorobium/Pelodictyon group</taxon>
        <taxon>Pelodictyon</taxon>
    </lineage>
</organism>
<gene>
    <name evidence="1" type="primary">purH</name>
    <name type="ordered locus">Plut_0432</name>
</gene>
<name>PUR9_CHLL3</name>
<protein>
    <recommendedName>
        <fullName evidence="1">Bifunctional purine biosynthesis protein PurH</fullName>
    </recommendedName>
    <domain>
        <recommendedName>
            <fullName evidence="1">Phosphoribosylaminoimidazolecarboxamide formyltransferase</fullName>
            <ecNumber evidence="1">2.1.2.3</ecNumber>
        </recommendedName>
        <alternativeName>
            <fullName evidence="1">AICAR transformylase</fullName>
        </alternativeName>
    </domain>
    <domain>
        <recommendedName>
            <fullName evidence="1">IMP cyclohydrolase</fullName>
            <ecNumber evidence="1">3.5.4.10</ecNumber>
        </recommendedName>
        <alternativeName>
            <fullName evidence="1">ATIC</fullName>
        </alternativeName>
        <alternativeName>
            <fullName evidence="1">IMP synthase</fullName>
        </alternativeName>
        <alternativeName>
            <fullName evidence="1">Inosinicase</fullName>
        </alternativeName>
    </domain>
</protein>
<evidence type="ECO:0000255" key="1">
    <source>
        <dbReference type="HAMAP-Rule" id="MF_00139"/>
    </source>
</evidence>
<evidence type="ECO:0000255" key="2">
    <source>
        <dbReference type="PROSITE-ProRule" id="PRU01202"/>
    </source>
</evidence>
<sequence>MSDPLIKRALVSVSDKTGIVDFCRELSSLGVEIFSTGGTLKALQDSGVKAASISLITGFPEIMDGRVKTLHPKIHGGLLAVRDNADHVAQAVENGIGFIDMVVVNLYPFEATVARPGVSFEDAIENIDIGGPSMLRSAAKNNESVTVLTDSADYPCVLAEMRSSGGRTTRATRLRLARQVFQLTSRYDGAIARYLTGAEGAAPAAAETMTVKLERELDMRYGENPHQSAGFYTLTDGEGTRSFGDYFEKLHGKELSYNNMLDIAAASGLVEEFRGEEPSVVIIKHTNPCGVAQAPTLVEAWHNAFATDTQAPFGGIIAFNRPLDMVTAEAVNGIFTEILIAPSYEEGVLDLLMKKKDRRLLVQKQALPKGGWEFKSTPFGMLVQERDSKIVAREDLNVVTKRQPTEEELGDLMFAWKICKHIKSNTILYVKNRRTFGVGAGQMSRVDSSKIARWKASEVNLDLHGSVVASDAFFPFADGLLAAAEAGVTAVIQPGGSIRDNEVIEAADANNLAMVFTGMRHFKH</sequence>
<dbReference type="EC" id="2.1.2.3" evidence="1"/>
<dbReference type="EC" id="3.5.4.10" evidence="1"/>
<dbReference type="EMBL" id="CP000096">
    <property type="protein sequence ID" value="ABB23320.1"/>
    <property type="molecule type" value="Genomic_DNA"/>
</dbReference>
<dbReference type="RefSeq" id="WP_011357195.1">
    <property type="nucleotide sequence ID" value="NC_007512.1"/>
</dbReference>
<dbReference type="SMR" id="Q3B5R1"/>
<dbReference type="STRING" id="319225.Plut_0432"/>
<dbReference type="KEGG" id="plt:Plut_0432"/>
<dbReference type="eggNOG" id="COG0138">
    <property type="taxonomic scope" value="Bacteria"/>
</dbReference>
<dbReference type="HOGENOM" id="CLU_016316_5_2_10"/>
<dbReference type="OrthoDB" id="9802065at2"/>
<dbReference type="UniPathway" id="UPA00074">
    <property type="reaction ID" value="UER00133"/>
</dbReference>
<dbReference type="UniPathway" id="UPA00074">
    <property type="reaction ID" value="UER00135"/>
</dbReference>
<dbReference type="Proteomes" id="UP000002709">
    <property type="component" value="Chromosome"/>
</dbReference>
<dbReference type="GO" id="GO:0005829">
    <property type="term" value="C:cytosol"/>
    <property type="evidence" value="ECO:0007669"/>
    <property type="project" value="TreeGrafter"/>
</dbReference>
<dbReference type="GO" id="GO:0003937">
    <property type="term" value="F:IMP cyclohydrolase activity"/>
    <property type="evidence" value="ECO:0007669"/>
    <property type="project" value="UniProtKB-UniRule"/>
</dbReference>
<dbReference type="GO" id="GO:0004643">
    <property type="term" value="F:phosphoribosylaminoimidazolecarboxamide formyltransferase activity"/>
    <property type="evidence" value="ECO:0007669"/>
    <property type="project" value="UniProtKB-UniRule"/>
</dbReference>
<dbReference type="GO" id="GO:0006189">
    <property type="term" value="P:'de novo' IMP biosynthetic process"/>
    <property type="evidence" value="ECO:0007669"/>
    <property type="project" value="UniProtKB-UniRule"/>
</dbReference>
<dbReference type="CDD" id="cd01421">
    <property type="entry name" value="IMPCH"/>
    <property type="match status" value="1"/>
</dbReference>
<dbReference type="FunFam" id="3.40.140.20:FF:000001">
    <property type="entry name" value="Bifunctional purine biosynthesis protein PurH"/>
    <property type="match status" value="1"/>
</dbReference>
<dbReference type="FunFam" id="3.40.50.1380:FF:000001">
    <property type="entry name" value="Bifunctional purine biosynthesis protein PurH"/>
    <property type="match status" value="1"/>
</dbReference>
<dbReference type="Gene3D" id="3.40.140.20">
    <property type="match status" value="2"/>
</dbReference>
<dbReference type="Gene3D" id="3.40.50.1380">
    <property type="entry name" value="Methylglyoxal synthase-like domain"/>
    <property type="match status" value="1"/>
</dbReference>
<dbReference type="HAMAP" id="MF_00139">
    <property type="entry name" value="PurH"/>
    <property type="match status" value="1"/>
</dbReference>
<dbReference type="InterPro" id="IPR024051">
    <property type="entry name" value="AICAR_Tfase_dup_dom_sf"/>
</dbReference>
<dbReference type="InterPro" id="IPR016193">
    <property type="entry name" value="Cytidine_deaminase-like"/>
</dbReference>
<dbReference type="InterPro" id="IPR011607">
    <property type="entry name" value="MGS-like_dom"/>
</dbReference>
<dbReference type="InterPro" id="IPR036914">
    <property type="entry name" value="MGS-like_dom_sf"/>
</dbReference>
<dbReference type="InterPro" id="IPR002695">
    <property type="entry name" value="PurH-like"/>
</dbReference>
<dbReference type="NCBIfam" id="NF002049">
    <property type="entry name" value="PRK00881.1"/>
    <property type="match status" value="1"/>
</dbReference>
<dbReference type="NCBIfam" id="TIGR00355">
    <property type="entry name" value="purH"/>
    <property type="match status" value="1"/>
</dbReference>
<dbReference type="PANTHER" id="PTHR11692:SF0">
    <property type="entry name" value="BIFUNCTIONAL PURINE BIOSYNTHESIS PROTEIN ATIC"/>
    <property type="match status" value="1"/>
</dbReference>
<dbReference type="PANTHER" id="PTHR11692">
    <property type="entry name" value="BIFUNCTIONAL PURINE BIOSYNTHESIS PROTEIN PURH"/>
    <property type="match status" value="1"/>
</dbReference>
<dbReference type="Pfam" id="PF01808">
    <property type="entry name" value="AICARFT_IMPCHas"/>
    <property type="match status" value="1"/>
</dbReference>
<dbReference type="Pfam" id="PF02142">
    <property type="entry name" value="MGS"/>
    <property type="match status" value="1"/>
</dbReference>
<dbReference type="PIRSF" id="PIRSF000414">
    <property type="entry name" value="AICARFT_IMPCHas"/>
    <property type="match status" value="1"/>
</dbReference>
<dbReference type="SMART" id="SM00798">
    <property type="entry name" value="AICARFT_IMPCHas"/>
    <property type="match status" value="1"/>
</dbReference>
<dbReference type="SMART" id="SM00851">
    <property type="entry name" value="MGS"/>
    <property type="match status" value="1"/>
</dbReference>
<dbReference type="SUPFAM" id="SSF53927">
    <property type="entry name" value="Cytidine deaminase-like"/>
    <property type="match status" value="1"/>
</dbReference>
<dbReference type="SUPFAM" id="SSF52335">
    <property type="entry name" value="Methylglyoxal synthase-like"/>
    <property type="match status" value="1"/>
</dbReference>
<dbReference type="PROSITE" id="PS51855">
    <property type="entry name" value="MGS"/>
    <property type="match status" value="1"/>
</dbReference>
<keyword id="KW-0378">Hydrolase</keyword>
<keyword id="KW-0511">Multifunctional enzyme</keyword>
<keyword id="KW-0658">Purine biosynthesis</keyword>
<keyword id="KW-1185">Reference proteome</keyword>
<keyword id="KW-0808">Transferase</keyword>
<reference key="1">
    <citation type="submission" date="2005-08" db="EMBL/GenBank/DDBJ databases">
        <title>Complete sequence of Pelodictyon luteolum DSM 273.</title>
        <authorList>
            <consortium name="US DOE Joint Genome Institute"/>
            <person name="Copeland A."/>
            <person name="Lucas S."/>
            <person name="Lapidus A."/>
            <person name="Barry K."/>
            <person name="Detter J.C."/>
            <person name="Glavina T."/>
            <person name="Hammon N."/>
            <person name="Israni S."/>
            <person name="Pitluck S."/>
            <person name="Bryant D."/>
            <person name="Schmutz J."/>
            <person name="Larimer F."/>
            <person name="Land M."/>
            <person name="Kyrpides N."/>
            <person name="Ivanova N."/>
            <person name="Richardson P."/>
        </authorList>
    </citation>
    <scope>NUCLEOTIDE SEQUENCE [LARGE SCALE GENOMIC DNA]</scope>
    <source>
        <strain>DSM 273 / BCRC 81028 / 2530</strain>
    </source>
</reference>
<accession>Q3B5R1</accession>
<comment type="catalytic activity">
    <reaction evidence="1">
        <text>(6R)-10-formyltetrahydrofolate + 5-amino-1-(5-phospho-beta-D-ribosyl)imidazole-4-carboxamide = 5-formamido-1-(5-phospho-D-ribosyl)imidazole-4-carboxamide + (6S)-5,6,7,8-tetrahydrofolate</text>
        <dbReference type="Rhea" id="RHEA:22192"/>
        <dbReference type="ChEBI" id="CHEBI:57453"/>
        <dbReference type="ChEBI" id="CHEBI:58467"/>
        <dbReference type="ChEBI" id="CHEBI:58475"/>
        <dbReference type="ChEBI" id="CHEBI:195366"/>
        <dbReference type="EC" id="2.1.2.3"/>
    </reaction>
</comment>
<comment type="catalytic activity">
    <reaction evidence="1">
        <text>IMP + H2O = 5-formamido-1-(5-phospho-D-ribosyl)imidazole-4-carboxamide</text>
        <dbReference type="Rhea" id="RHEA:18445"/>
        <dbReference type="ChEBI" id="CHEBI:15377"/>
        <dbReference type="ChEBI" id="CHEBI:58053"/>
        <dbReference type="ChEBI" id="CHEBI:58467"/>
        <dbReference type="EC" id="3.5.4.10"/>
    </reaction>
</comment>
<comment type="pathway">
    <text evidence="1">Purine metabolism; IMP biosynthesis via de novo pathway; 5-formamido-1-(5-phospho-D-ribosyl)imidazole-4-carboxamide from 5-amino-1-(5-phospho-D-ribosyl)imidazole-4-carboxamide (10-formyl THF route): step 1/1.</text>
</comment>
<comment type="pathway">
    <text evidence="1">Purine metabolism; IMP biosynthesis via de novo pathway; IMP from 5-formamido-1-(5-phospho-D-ribosyl)imidazole-4-carboxamide: step 1/1.</text>
</comment>
<comment type="domain">
    <text evidence="1">The IMP cyclohydrolase activity resides in the N-terminal region.</text>
</comment>
<comment type="similarity">
    <text evidence="1">Belongs to the PurH family.</text>
</comment>
<feature type="chain" id="PRO_1000018923" description="Bifunctional purine biosynthesis protein PurH">
    <location>
        <begin position="1"/>
        <end position="524"/>
    </location>
</feature>
<feature type="domain" description="MGS-like" evidence="2">
    <location>
        <begin position="1"/>
        <end position="149"/>
    </location>
</feature>